<comment type="function">
    <text evidence="1">Plays an adhesive role by integrating collagen bundles. It is probably associated with the surface of interstitial collagen fibrils via COL1. The COL2 domain may then serve as a rigid arm which sticks out from the fibril and protrudes the large N-terminal globular domain into the extracellular space, where it might interact with other matrix molecules or cell surface receptors (By similarity).</text>
</comment>
<comment type="subunit">
    <text evidence="2">Homotrimer.</text>
</comment>
<comment type="subcellular location">
    <subcellularLocation>
        <location evidence="2">Secreted</location>
        <location evidence="2">Extracellular space</location>
        <location evidence="2">Extracellular matrix</location>
    </subcellularLocation>
</comment>
<comment type="alternative products">
    <event type="alternative splicing"/>
    <isoform>
        <id>Q80X19-1</id>
        <name evidence="7">1</name>
        <sequence type="displayed"/>
    </isoform>
    <isoform>
        <id>Q80X19-2</id>
        <name evidence="9">2</name>
        <sequence type="described" ref="VSP_051652"/>
    </isoform>
</comment>
<comment type="PTM">
    <text evidence="2">Lysines at the third position of the tripeptide repeating unit (G-X-Y) are hydroxylated in all cases and bind carbohydrates.</text>
</comment>
<comment type="PTM">
    <text evidence="2">Prolines at the third position of the tripeptide repeating unit (G-X-Y) are hydroxylated in some or all of the chains.</text>
</comment>
<comment type="PTM">
    <text evidence="2">May contain numerous cysteine residues involved in inter- and intramolecular disulfide bonding.</text>
</comment>
<comment type="similarity">
    <text evidence="3">Belongs to the fibril-associated collagens with interrupted helices (FACIT) family.</text>
</comment>
<feature type="signal peptide" evidence="3">
    <location>
        <begin position="1"/>
        <end position="28"/>
    </location>
</feature>
<feature type="chain" id="PRO_0000005786" description="Collagen alpha-1(XIV) chain">
    <location>
        <begin position="29"/>
        <end position="1797"/>
    </location>
</feature>
<feature type="domain" description="Fibronectin type-III 1" evidence="5">
    <location>
        <begin position="32"/>
        <end position="122"/>
    </location>
</feature>
<feature type="domain" description="VWFA 1" evidence="4">
    <location>
        <begin position="159"/>
        <end position="331"/>
    </location>
</feature>
<feature type="domain" description="Fibronectin type-III 2" evidence="5">
    <location>
        <begin position="356"/>
        <end position="445"/>
    </location>
</feature>
<feature type="domain" description="Fibronectin type-III 3" evidence="5">
    <location>
        <begin position="446"/>
        <end position="537"/>
    </location>
</feature>
<feature type="domain" description="Fibronectin type-III 4" evidence="5">
    <location>
        <begin position="538"/>
        <end position="625"/>
    </location>
</feature>
<feature type="domain" description="Fibronectin type-III 5" evidence="5">
    <location>
        <begin position="627"/>
        <end position="716"/>
    </location>
</feature>
<feature type="domain" description="Fibronectin type-III 6" evidence="5">
    <location>
        <begin position="738"/>
        <end position="830"/>
    </location>
</feature>
<feature type="domain" description="Fibronectin type-III 7" evidence="5">
    <location>
        <begin position="832"/>
        <end position="922"/>
    </location>
</feature>
<feature type="domain" description="Fibronectin type-III 8" evidence="5">
    <location>
        <begin position="923"/>
        <end position="1014"/>
    </location>
</feature>
<feature type="domain" description="VWFA 2" evidence="4">
    <location>
        <begin position="1033"/>
        <end position="1206"/>
    </location>
</feature>
<feature type="domain" description="Laminin G-like">
    <location>
        <begin position="1230"/>
        <end position="1425"/>
    </location>
</feature>
<feature type="domain" description="Collagen-like 1">
    <location>
        <begin position="1463"/>
        <end position="1511"/>
    </location>
</feature>
<feature type="domain" description="Collagen-like 2">
    <location>
        <begin position="1515"/>
        <end position="1571"/>
    </location>
</feature>
<feature type="domain" description="Collagen-like 3">
    <location>
        <begin position="1572"/>
        <end position="1610"/>
    </location>
</feature>
<feature type="domain" description="Collagen-like 4">
    <location>
        <begin position="1655"/>
        <end position="1706"/>
    </location>
</feature>
<feature type="domain" description="Collagen-like 5">
    <location>
        <begin position="1708"/>
        <end position="1758"/>
    </location>
</feature>
<feature type="region of interest" description="Disordered" evidence="6">
    <location>
        <begin position="124"/>
        <end position="145"/>
    </location>
</feature>
<feature type="region of interest" description="Nonhelical region (NC4)">
    <location>
        <begin position="1218"/>
        <end position="1459"/>
    </location>
</feature>
<feature type="region of interest" description="Triple-helical region 1 (COL2)">
    <location>
        <begin position="1460"/>
        <end position="1611"/>
    </location>
</feature>
<feature type="region of interest" description="Disordered" evidence="6">
    <location>
        <begin position="1463"/>
        <end position="1611"/>
    </location>
</feature>
<feature type="region of interest" description="Disordered" evidence="6">
    <location>
        <begin position="1645"/>
        <end position="1797"/>
    </location>
</feature>
<feature type="region of interest" description="Triple-helical region 2 (COL1)">
    <location>
        <begin position="1655"/>
        <end position="1780"/>
    </location>
</feature>
<feature type="short sequence motif" description="Cell attachment site" evidence="3">
    <location>
        <begin position="1608"/>
        <end position="1610"/>
    </location>
</feature>
<feature type="compositionally biased region" description="Basic and acidic residues" evidence="6">
    <location>
        <begin position="124"/>
        <end position="135"/>
    </location>
</feature>
<feature type="compositionally biased region" description="Low complexity" evidence="6">
    <location>
        <begin position="1474"/>
        <end position="1486"/>
    </location>
</feature>
<feature type="compositionally biased region" description="Gly residues" evidence="6">
    <location>
        <begin position="1537"/>
        <end position="1546"/>
    </location>
</feature>
<feature type="compositionally biased region" description="Low complexity" evidence="6">
    <location>
        <begin position="1574"/>
        <end position="1584"/>
    </location>
</feature>
<feature type="compositionally biased region" description="Pro residues" evidence="6">
    <location>
        <begin position="1729"/>
        <end position="1741"/>
    </location>
</feature>
<feature type="compositionally biased region" description="Low complexity" evidence="6">
    <location>
        <begin position="1742"/>
        <end position="1758"/>
    </location>
</feature>
<feature type="glycosylation site" description="N-linked (GlcNAc...) asparagine" evidence="3">
    <location>
        <position position="94"/>
    </location>
</feature>
<feature type="glycosylation site" description="N-linked (GlcNAc...) asparagine" evidence="3">
    <location>
        <position position="138"/>
    </location>
</feature>
<feature type="glycosylation site" description="N-linked (GlcNAc...) asparagine" evidence="3">
    <location>
        <position position="373"/>
    </location>
</feature>
<feature type="glycosylation site" description="N-linked (GlcNAc...) asparagine" evidence="3">
    <location>
        <position position="1385"/>
    </location>
</feature>
<feature type="glycosylation site" description="N-linked (GlcNAc...) asparagine" evidence="3">
    <location>
        <position position="1389"/>
    </location>
</feature>
<feature type="splice variant" id="VSP_051652" description="In isoform 2." evidence="8">
    <original>VSHPDQPEFTPVQDEQEAMDLWSAGI</original>
    <variation>DLIPYNDYQH</variation>
    <location>
        <begin position="1772"/>
        <end position="1797"/>
    </location>
</feature>
<feature type="sequence conflict" description="In Ref. 1; AAO64442." evidence="9" ref="1">
    <original>S</original>
    <variation>F</variation>
    <location>
        <position position="406"/>
    </location>
</feature>
<feature type="sequence conflict" description="In Ref. 1; AAO64442." evidence="9" ref="1">
    <original>VGT</original>
    <variation>GKN</variation>
    <location>
        <begin position="782"/>
        <end position="784"/>
    </location>
</feature>
<feature type="sequence conflict" description="In Ref. 4; BAE23197." evidence="9" ref="4">
    <original>D</original>
    <variation>H</variation>
    <location>
        <position position="1047"/>
    </location>
</feature>
<feature type="sequence conflict" description="In Ref. 4; BAE23197." evidence="9" ref="4">
    <original>N</original>
    <variation>S</variation>
    <location>
        <position position="1389"/>
    </location>
</feature>
<protein>
    <recommendedName>
        <fullName>Collagen alpha-1(XIV) chain</fullName>
    </recommendedName>
</protein>
<reference evidence="9 10" key="1">
    <citation type="journal article" date="2003" name="Matrix Biol.">
        <title>Complete primary structure and genomic organization of the mouse Col14a1 gene.</title>
        <authorList>
            <person name="Gerecke D.R."/>
            <person name="Meng X."/>
            <person name="Liu B."/>
            <person name="Birk D.E."/>
        </authorList>
    </citation>
    <scope>NUCLEOTIDE SEQUENCE [MRNA] (ISOFORM 1)</scope>
    <source>
        <strain evidence="10">CD-1</strain>
        <tissue evidence="7">Tendon</tissue>
    </source>
</reference>
<reference key="2">
    <citation type="journal article" date="2004" name="Matrix Biol.">
        <authorList>
            <person name="Gerecke D.R."/>
            <person name="Meng X."/>
            <person name="Liu B."/>
            <person name="Birk D.E."/>
        </authorList>
    </citation>
    <scope>ERRATUM OF PUBMED:12853031</scope>
</reference>
<reference key="3">
    <citation type="journal article" date="2009" name="PLoS Biol.">
        <title>Lineage-specific biology revealed by a finished genome assembly of the mouse.</title>
        <authorList>
            <person name="Church D.M."/>
            <person name="Goodstadt L."/>
            <person name="Hillier L.W."/>
            <person name="Zody M.C."/>
            <person name="Goldstein S."/>
            <person name="She X."/>
            <person name="Bult C.J."/>
            <person name="Agarwala R."/>
            <person name="Cherry J.L."/>
            <person name="DiCuccio M."/>
            <person name="Hlavina W."/>
            <person name="Kapustin Y."/>
            <person name="Meric P."/>
            <person name="Maglott D."/>
            <person name="Birtle Z."/>
            <person name="Marques A.C."/>
            <person name="Graves T."/>
            <person name="Zhou S."/>
            <person name="Teague B."/>
            <person name="Potamousis K."/>
            <person name="Churas C."/>
            <person name="Place M."/>
            <person name="Herschleb J."/>
            <person name="Runnheim R."/>
            <person name="Forrest D."/>
            <person name="Amos-Landgraf J."/>
            <person name="Schwartz D.C."/>
            <person name="Cheng Z."/>
            <person name="Lindblad-Toh K."/>
            <person name="Eichler E.E."/>
            <person name="Ponting C.P."/>
        </authorList>
    </citation>
    <scope>NUCLEOTIDE SEQUENCE [LARGE SCALE GENOMIC DNA]</scope>
    <source>
        <strain>C57BL/6J</strain>
    </source>
</reference>
<reference key="4">
    <citation type="journal article" date="2005" name="Science">
        <title>The transcriptional landscape of the mammalian genome.</title>
        <authorList>
            <person name="Carninci P."/>
            <person name="Kasukawa T."/>
            <person name="Katayama S."/>
            <person name="Gough J."/>
            <person name="Frith M.C."/>
            <person name="Maeda N."/>
            <person name="Oyama R."/>
            <person name="Ravasi T."/>
            <person name="Lenhard B."/>
            <person name="Wells C."/>
            <person name="Kodzius R."/>
            <person name="Shimokawa K."/>
            <person name="Bajic V.B."/>
            <person name="Brenner S.E."/>
            <person name="Batalov S."/>
            <person name="Forrest A.R."/>
            <person name="Zavolan M."/>
            <person name="Davis M.J."/>
            <person name="Wilming L.G."/>
            <person name="Aidinis V."/>
            <person name="Allen J.E."/>
            <person name="Ambesi-Impiombato A."/>
            <person name="Apweiler R."/>
            <person name="Aturaliya R.N."/>
            <person name="Bailey T.L."/>
            <person name="Bansal M."/>
            <person name="Baxter L."/>
            <person name="Beisel K.W."/>
            <person name="Bersano T."/>
            <person name="Bono H."/>
            <person name="Chalk A.M."/>
            <person name="Chiu K.P."/>
            <person name="Choudhary V."/>
            <person name="Christoffels A."/>
            <person name="Clutterbuck D.R."/>
            <person name="Crowe M.L."/>
            <person name="Dalla E."/>
            <person name="Dalrymple B.P."/>
            <person name="de Bono B."/>
            <person name="Della Gatta G."/>
            <person name="di Bernardo D."/>
            <person name="Down T."/>
            <person name="Engstrom P."/>
            <person name="Fagiolini M."/>
            <person name="Faulkner G."/>
            <person name="Fletcher C.F."/>
            <person name="Fukushima T."/>
            <person name="Furuno M."/>
            <person name="Futaki S."/>
            <person name="Gariboldi M."/>
            <person name="Georgii-Hemming P."/>
            <person name="Gingeras T.R."/>
            <person name="Gojobori T."/>
            <person name="Green R.E."/>
            <person name="Gustincich S."/>
            <person name="Harbers M."/>
            <person name="Hayashi Y."/>
            <person name="Hensch T.K."/>
            <person name="Hirokawa N."/>
            <person name="Hill D."/>
            <person name="Huminiecki L."/>
            <person name="Iacono M."/>
            <person name="Ikeo K."/>
            <person name="Iwama A."/>
            <person name="Ishikawa T."/>
            <person name="Jakt M."/>
            <person name="Kanapin A."/>
            <person name="Katoh M."/>
            <person name="Kawasawa Y."/>
            <person name="Kelso J."/>
            <person name="Kitamura H."/>
            <person name="Kitano H."/>
            <person name="Kollias G."/>
            <person name="Krishnan S.P."/>
            <person name="Kruger A."/>
            <person name="Kummerfeld S.K."/>
            <person name="Kurochkin I.V."/>
            <person name="Lareau L.F."/>
            <person name="Lazarevic D."/>
            <person name="Lipovich L."/>
            <person name="Liu J."/>
            <person name="Liuni S."/>
            <person name="McWilliam S."/>
            <person name="Madan Babu M."/>
            <person name="Madera M."/>
            <person name="Marchionni L."/>
            <person name="Matsuda H."/>
            <person name="Matsuzawa S."/>
            <person name="Miki H."/>
            <person name="Mignone F."/>
            <person name="Miyake S."/>
            <person name="Morris K."/>
            <person name="Mottagui-Tabar S."/>
            <person name="Mulder N."/>
            <person name="Nakano N."/>
            <person name="Nakauchi H."/>
            <person name="Ng P."/>
            <person name="Nilsson R."/>
            <person name="Nishiguchi S."/>
            <person name="Nishikawa S."/>
            <person name="Nori F."/>
            <person name="Ohara O."/>
            <person name="Okazaki Y."/>
            <person name="Orlando V."/>
            <person name="Pang K.C."/>
            <person name="Pavan W.J."/>
            <person name="Pavesi G."/>
            <person name="Pesole G."/>
            <person name="Petrovsky N."/>
            <person name="Piazza S."/>
            <person name="Reed J."/>
            <person name="Reid J.F."/>
            <person name="Ring B.Z."/>
            <person name="Ringwald M."/>
            <person name="Rost B."/>
            <person name="Ruan Y."/>
            <person name="Salzberg S.L."/>
            <person name="Sandelin A."/>
            <person name="Schneider C."/>
            <person name="Schoenbach C."/>
            <person name="Sekiguchi K."/>
            <person name="Semple C.A."/>
            <person name="Seno S."/>
            <person name="Sessa L."/>
            <person name="Sheng Y."/>
            <person name="Shibata Y."/>
            <person name="Shimada H."/>
            <person name="Shimada K."/>
            <person name="Silva D."/>
            <person name="Sinclair B."/>
            <person name="Sperling S."/>
            <person name="Stupka E."/>
            <person name="Sugiura K."/>
            <person name="Sultana R."/>
            <person name="Takenaka Y."/>
            <person name="Taki K."/>
            <person name="Tammoja K."/>
            <person name="Tan S.L."/>
            <person name="Tang S."/>
            <person name="Taylor M.S."/>
            <person name="Tegner J."/>
            <person name="Teichmann S.A."/>
            <person name="Ueda H.R."/>
            <person name="van Nimwegen E."/>
            <person name="Verardo R."/>
            <person name="Wei C.L."/>
            <person name="Yagi K."/>
            <person name="Yamanishi H."/>
            <person name="Zabarovsky E."/>
            <person name="Zhu S."/>
            <person name="Zimmer A."/>
            <person name="Hide W."/>
            <person name="Bult C."/>
            <person name="Grimmond S.M."/>
            <person name="Teasdale R.D."/>
            <person name="Liu E.T."/>
            <person name="Brusic V."/>
            <person name="Quackenbush J."/>
            <person name="Wahlestedt C."/>
            <person name="Mattick J.S."/>
            <person name="Hume D.A."/>
            <person name="Kai C."/>
            <person name="Sasaki D."/>
            <person name="Tomaru Y."/>
            <person name="Fukuda S."/>
            <person name="Kanamori-Katayama M."/>
            <person name="Suzuki M."/>
            <person name="Aoki J."/>
            <person name="Arakawa T."/>
            <person name="Iida J."/>
            <person name="Imamura K."/>
            <person name="Itoh M."/>
            <person name="Kato T."/>
            <person name="Kawaji H."/>
            <person name="Kawagashira N."/>
            <person name="Kawashima T."/>
            <person name="Kojima M."/>
            <person name="Kondo S."/>
            <person name="Konno H."/>
            <person name="Nakano K."/>
            <person name="Ninomiya N."/>
            <person name="Nishio T."/>
            <person name="Okada M."/>
            <person name="Plessy C."/>
            <person name="Shibata K."/>
            <person name="Shiraki T."/>
            <person name="Suzuki S."/>
            <person name="Tagami M."/>
            <person name="Waki K."/>
            <person name="Watahiki A."/>
            <person name="Okamura-Oho Y."/>
            <person name="Suzuki H."/>
            <person name="Kawai J."/>
            <person name="Hayashizaki Y."/>
        </authorList>
    </citation>
    <scope>NUCLEOTIDE SEQUENCE [LARGE SCALE MRNA] OF 1047-1797 (ISOFORM 1)</scope>
    <scope>NUCLEOTIDE SEQUENCE [LARGE SCALE MRNA] OF 1262-1797 (ISOFORM 2)</scope>
    <source>
        <strain>C57BL/6J</strain>
        <tissue>Embryo</tissue>
        <tissue>Head</tissue>
    </source>
</reference>
<reference evidence="9 11" key="5">
    <citation type="journal article" date="1999" name="Cytogenet. Cell Genet.">
        <title>Comparative cytogenetic mapping of the gene for human and mouse collagen XIV.</title>
        <authorList>
            <person name="Imhof M."/>
            <person name="Trueb B."/>
        </authorList>
    </citation>
    <scope>NUCLEOTIDE SEQUENCE [MRNA] OF 1672-1797 (ISOFORM 1)</scope>
    <source>
        <tissue evidence="11">Heart</tissue>
    </source>
</reference>
<reference key="6">
    <citation type="journal article" date="2010" name="Cell">
        <title>A tissue-specific atlas of mouse protein phosphorylation and expression.</title>
        <authorList>
            <person name="Huttlin E.L."/>
            <person name="Jedrychowski M.P."/>
            <person name="Elias J.E."/>
            <person name="Goswami T."/>
            <person name="Rad R."/>
            <person name="Beausoleil S.A."/>
            <person name="Villen J."/>
            <person name="Haas W."/>
            <person name="Sowa M.E."/>
            <person name="Gygi S.P."/>
        </authorList>
    </citation>
    <scope>IDENTIFICATION BY MASS SPECTROMETRY [LARGE SCALE ANALYSIS]</scope>
    <source>
        <tissue>Brown adipose tissue</tissue>
        <tissue>Heart</tissue>
        <tissue>Kidney</tissue>
        <tissue>Liver</tissue>
        <tissue>Lung</tissue>
        <tissue>Pancreas</tissue>
        <tissue>Spleen</tissue>
        <tissue>Testis</tissue>
    </source>
</reference>
<sequence>MMIWQCKMRDWLILAFLAAACFCTIVRGQVAPPTRLRYNVISHDSIQISWKAPRGKFGGYKLLVAPASGGKTNQMNLQNTATKAIIQGLLPEQNYTVQLIAYYKDKESKPAQGQFRIKDLEKRKDPTKPKVKVVDKGNGSKPTSPEEVKFFCETPAIADIVILVDGSWSIGRFNFRLVRNFLENLVTAFNVGSEKTRIGLAQYSGDPRIEWHLNAFNTKDEVIDAVRSLPYKGGNTLTGLALNFIFENSFKPEAGSRSGVSKIGILITDGKSQDDIIPPSRNLRESGVELFAIGVKNADLSELQEIASEPDSTHVYNVAEFDLMHTVVESLTRTVCSRVEEQDKEIKASALATIGPPTELITSEVTARSFMVNWTQSPGKVEKYRVVYYPTRGGKPEEVVVDGSVSSTVLKNLMSSTEYQIAVFAVSAHTASEGLRGAETTLALPMASDLELYDVTENSMRVRWDAVPGATGYLILYAPLTEGLAGDEKEMKIGETHTDIELSGLFPNTEYTVTVYAMFGEEASDPATGQETTLPLTPPRNLRISNVGSNSARLTWDPASGKISGYRIVYTSADGTEINEVEVDPITTFPLKGLTPLTEYSIAIFSIYEEGQSLPLVGEFTTEEVPAQQYLEIDEVKTDSFRVTWHPLSAEEGQHKLMWIPVYGGKTQEVDLKEEQDSYVIEGLDPGTEYEVSLLAVLDDGSESEVVTAVGTTLDDFWTEAPTAIEPTSPVTSVLQTGIRNLVVDDETATSLRVSWDISDSNVEQFRVTYLKAQGDPMEEVVGTVMVPGVQNSLLLKALLPDTEYKVTVTPVYTVGEGVSVSAPGKTLPSSGPQNLRVSEEWYNRVRITWDPPSGPVKGYRIVYKPVSVPGQTLETFVGADINTIVMTNLLSGMDYNVKIFASQASGFSDALTGLVQTLFLGVTDLQANQVEMTSLCARWQIHRHATAYRIVLESLQDTQAQESTVGGGVNRHCFYGLQPDSEYKISVYTKLQELEGPSVSIMQKTQSLPTEPPTFPPTIPPAKEVCKAAKADLVFMVDGSWSIGDDNFNKIINFLYSTVGALDKIGADGTQVAMVQFTDDPRTEFKLDSYKTKETLLDAIRHISYKGGNTKTGKAIKHVRDTLFTSDSGTRRGIPKVIVVITDGRSQDDVNKISREMQADGFNIFAIGVADADYSELVQIGSKPSSRHVFFVDDFDAFKKIEDELITFVCETASATCPMVHKDGVDLAGFKMMEMFGLVEKDFSAVEGVSMEPGTFNLFPCYQIHKDALVSQPTKYLHPEGLPSDYTMSFLFRILPDTPQEPFALWEILNKNSEPLVGIILDNGGKTLTYFNYDYTGDFQTVTFEGPDIRKMFYGSFHKLHVVVSKTLAKVVVDCKEVGQKAINASANITSDGVEVLGRMVRSRGPNGNSAPFQLQMFDIVCSTSWASKDRCCELPGLRDEESCPDLPRSCSCSETNEVALGPAGPPGGPGLRGPKGQQGEQGPKGPEGPRGETGPAGPQGPPGPQGPSGLSIQGMPGMPGDKGDKGDAGLPGPQGVPGGVGSPGRDGSPGQRGFPGKDGSSGPPGPPGPIGIPGAPGVPGITGSMGPQGALGPPGVPGAKGERGERGDLQSQAMVRAVARQVCEQLIQSHMARYTAILNQIPSQSSSIRTIQGPPGEPGRPGSPGTPGEQGPPGTPGFPGNAGVPGTPGERGLTGVKGEKGNPGIGTQGPRGPPGPAGPSGESRPGSPGPPGSPGPRGPPGHLGVPGPQGPSGQPGYCDPSSCSAYGVGVSHPDQPEFTPVQDEQEAMDLWSAGI</sequence>
<dbReference type="EMBL" id="AY221110">
    <property type="protein sequence ID" value="AAO64442.1"/>
    <property type="molecule type" value="mRNA"/>
</dbReference>
<dbReference type="EMBL" id="AC131337">
    <property type="status" value="NOT_ANNOTATED_CDS"/>
    <property type="molecule type" value="Genomic_DNA"/>
</dbReference>
<dbReference type="EMBL" id="AC133156">
    <property type="status" value="NOT_ANNOTATED_CDS"/>
    <property type="molecule type" value="Genomic_DNA"/>
</dbReference>
<dbReference type="EMBL" id="AK052963">
    <property type="protein sequence ID" value="BAC35222.1"/>
    <property type="molecule type" value="mRNA"/>
</dbReference>
<dbReference type="EMBL" id="AK136987">
    <property type="protein sequence ID" value="BAE23197.1"/>
    <property type="molecule type" value="mRNA"/>
</dbReference>
<dbReference type="EMBL" id="AJ131395">
    <property type="protein sequence ID" value="CAB44661.1"/>
    <property type="molecule type" value="mRNA"/>
</dbReference>
<dbReference type="CCDS" id="CCDS88765.1">
    <molecule id="Q80X19-1"/>
</dbReference>
<dbReference type="RefSeq" id="NP_001355351.1">
    <molecule id="Q80X19-1"/>
    <property type="nucleotide sequence ID" value="NM_001368422.1"/>
</dbReference>
<dbReference type="RefSeq" id="XP_006520447.1">
    <property type="nucleotide sequence ID" value="XM_006520384.3"/>
</dbReference>
<dbReference type="RefSeq" id="XP_006520448.1">
    <molecule id="Q80X19-2"/>
    <property type="nucleotide sequence ID" value="XM_006520385.4"/>
</dbReference>
<dbReference type="SMR" id="Q80X19"/>
<dbReference type="BioGRID" id="198809">
    <property type="interactions" value="5"/>
</dbReference>
<dbReference type="ComplexPortal" id="CPX-2992">
    <property type="entry name" value="Collagen type XIV trimer"/>
</dbReference>
<dbReference type="FunCoup" id="Q80X19">
    <property type="interactions" value="281"/>
</dbReference>
<dbReference type="STRING" id="10090.ENSMUSP00000105850"/>
<dbReference type="GlyCosmos" id="Q80X19">
    <property type="glycosylation" value="5 sites, No reported glycans"/>
</dbReference>
<dbReference type="GlyGen" id="Q80X19">
    <property type="glycosylation" value="10 sites, 3 N-linked glycans (3 sites), 1 O-linked glycan (1 site)"/>
</dbReference>
<dbReference type="iPTMnet" id="Q80X19"/>
<dbReference type="PhosphoSitePlus" id="Q80X19"/>
<dbReference type="jPOST" id="Q80X19"/>
<dbReference type="PaxDb" id="10090-ENSMUSP00000105846"/>
<dbReference type="ProteomicsDB" id="283484">
    <molecule id="Q80X19-1"/>
</dbReference>
<dbReference type="ProteomicsDB" id="283485">
    <molecule id="Q80X19-2"/>
</dbReference>
<dbReference type="Antibodypedia" id="13712">
    <property type="antibodies" value="117 antibodies from 24 providers"/>
</dbReference>
<dbReference type="DNASU" id="12818"/>
<dbReference type="Ensembl" id="ENSMUST00000023053.12">
    <molecule id="Q80X19-1"/>
    <property type="protein sequence ID" value="ENSMUSP00000023053.6"/>
    <property type="gene ID" value="ENSMUSG00000022371.18"/>
</dbReference>
<dbReference type="GeneID" id="12818"/>
<dbReference type="UCSC" id="uc007vsd.2">
    <molecule id="Q80X19-1"/>
    <property type="organism name" value="mouse"/>
</dbReference>
<dbReference type="AGR" id="MGI:1341272"/>
<dbReference type="CTD" id="7373"/>
<dbReference type="MGI" id="MGI:1341272">
    <property type="gene designation" value="Col14a1"/>
</dbReference>
<dbReference type="VEuPathDB" id="HostDB:ENSMUSG00000022371"/>
<dbReference type="eggNOG" id="KOG3544">
    <property type="taxonomic scope" value="Eukaryota"/>
</dbReference>
<dbReference type="GeneTree" id="ENSGT00940000153769"/>
<dbReference type="InParanoid" id="Q80X19"/>
<dbReference type="PhylomeDB" id="Q80X19"/>
<dbReference type="Reactome" id="R-MMU-1650814">
    <property type="pathway name" value="Collagen biosynthesis and modifying enzymes"/>
</dbReference>
<dbReference type="Reactome" id="R-MMU-2022090">
    <property type="pathway name" value="Assembly of collagen fibrils and other multimeric structures"/>
</dbReference>
<dbReference type="Reactome" id="R-MMU-8948216">
    <property type="pathway name" value="Collagen chain trimerization"/>
</dbReference>
<dbReference type="BioGRID-ORCS" id="12818">
    <property type="hits" value="4 hits in 77 CRISPR screens"/>
</dbReference>
<dbReference type="ChiTaRS" id="Col14a1">
    <property type="organism name" value="mouse"/>
</dbReference>
<dbReference type="PRO" id="PR:Q80X19"/>
<dbReference type="Proteomes" id="UP000000589">
    <property type="component" value="Chromosome 15"/>
</dbReference>
<dbReference type="RNAct" id="Q80X19">
    <property type="molecule type" value="protein"/>
</dbReference>
<dbReference type="Bgee" id="ENSMUSG00000022371">
    <property type="expression patterns" value="Expressed in efferent duct and 189 other cell types or tissues"/>
</dbReference>
<dbReference type="ExpressionAtlas" id="Q80X19">
    <property type="expression patterns" value="baseline and differential"/>
</dbReference>
<dbReference type="GO" id="GO:0005581">
    <property type="term" value="C:collagen trimer"/>
    <property type="evidence" value="ECO:0007669"/>
    <property type="project" value="UniProtKB-KW"/>
</dbReference>
<dbReference type="GO" id="GO:0062023">
    <property type="term" value="C:collagen-containing extracellular matrix"/>
    <property type="evidence" value="ECO:0007005"/>
    <property type="project" value="BHF-UCL"/>
</dbReference>
<dbReference type="GO" id="GO:0005615">
    <property type="term" value="C:extracellular space"/>
    <property type="evidence" value="ECO:0007005"/>
    <property type="project" value="BHF-UCL"/>
</dbReference>
<dbReference type="GO" id="GO:0005614">
    <property type="term" value="C:interstitial matrix"/>
    <property type="evidence" value="ECO:0000314"/>
    <property type="project" value="MGI"/>
</dbReference>
<dbReference type="GO" id="GO:0007155">
    <property type="term" value="P:cell adhesion"/>
    <property type="evidence" value="ECO:0007669"/>
    <property type="project" value="UniProtKB-KW"/>
</dbReference>
<dbReference type="GO" id="GO:0030199">
    <property type="term" value="P:collagen fibril organization"/>
    <property type="evidence" value="ECO:0000315"/>
    <property type="project" value="MGI"/>
</dbReference>
<dbReference type="GO" id="GO:0048873">
    <property type="term" value="P:homeostasis of number of cells within a tissue"/>
    <property type="evidence" value="ECO:0000315"/>
    <property type="project" value="MGI"/>
</dbReference>
<dbReference type="GO" id="GO:0061050">
    <property type="term" value="P:regulation of cell growth involved in cardiac muscle cell development"/>
    <property type="evidence" value="ECO:0000315"/>
    <property type="project" value="MGI"/>
</dbReference>
<dbReference type="GO" id="GO:0003229">
    <property type="term" value="P:ventricular cardiac muscle tissue development"/>
    <property type="evidence" value="ECO:0000315"/>
    <property type="project" value="MGI"/>
</dbReference>
<dbReference type="CDD" id="cd00063">
    <property type="entry name" value="FN3"/>
    <property type="match status" value="7"/>
</dbReference>
<dbReference type="CDD" id="cd01482">
    <property type="entry name" value="vWA_collagen_alphaI-XII-like"/>
    <property type="match status" value="2"/>
</dbReference>
<dbReference type="FunFam" id="2.60.40.10:FF:000018">
    <property type="entry name" value="collagen alpha-1(XII) chain isoform X1"/>
    <property type="match status" value="1"/>
</dbReference>
<dbReference type="FunFam" id="2.60.40.10:FF:000444">
    <property type="entry name" value="Collagen alpha-1(XIV) chain isoform X2"/>
    <property type="match status" value="1"/>
</dbReference>
<dbReference type="FunFam" id="2.60.40.10:FF:000514">
    <property type="entry name" value="Collagen alpha-1(XIV) chain isoform X2"/>
    <property type="match status" value="1"/>
</dbReference>
<dbReference type="FunFam" id="2.60.40.10:FF:000546">
    <property type="entry name" value="Collagen alpha-1(XIV) chain isoform X2"/>
    <property type="match status" value="1"/>
</dbReference>
<dbReference type="FunFam" id="2.60.40.10:FF:000403">
    <property type="entry name" value="collagen alpha-1(XIV) chain isoform X2"/>
    <property type="match status" value="1"/>
</dbReference>
<dbReference type="FunFam" id="2.60.40.10:FF:000615">
    <property type="entry name" value="collagen alpha-1(XIV) chain isoform X2"/>
    <property type="match status" value="1"/>
</dbReference>
<dbReference type="FunFam" id="2.60.40.10:FF:000656">
    <property type="entry name" value="collagen alpha-1(XIV) chain isoform X2"/>
    <property type="match status" value="1"/>
</dbReference>
<dbReference type="FunFam" id="2.60.120.200:FF:000008">
    <property type="entry name" value="Collagen type XII alpha 1 chain"/>
    <property type="match status" value="1"/>
</dbReference>
<dbReference type="FunFam" id="2.60.40.10:FF:000234">
    <property type="entry name" value="Collagen, type XII, alpha 1"/>
    <property type="match status" value="1"/>
</dbReference>
<dbReference type="FunFam" id="3.40.50.410:FF:000001">
    <property type="entry name" value="Collagen, type XII, alpha 1"/>
    <property type="match status" value="2"/>
</dbReference>
<dbReference type="Gene3D" id="2.60.120.200">
    <property type="match status" value="1"/>
</dbReference>
<dbReference type="Gene3D" id="2.60.40.10">
    <property type="entry name" value="Immunoglobulins"/>
    <property type="match status" value="8"/>
</dbReference>
<dbReference type="Gene3D" id="3.40.50.410">
    <property type="entry name" value="von Willebrand factor, type A domain"/>
    <property type="match status" value="2"/>
</dbReference>
<dbReference type="InterPro" id="IPR008160">
    <property type="entry name" value="Collagen"/>
</dbReference>
<dbReference type="InterPro" id="IPR013320">
    <property type="entry name" value="ConA-like_dom_sf"/>
</dbReference>
<dbReference type="InterPro" id="IPR050525">
    <property type="entry name" value="ECM_Assembly_Org"/>
</dbReference>
<dbReference type="InterPro" id="IPR003961">
    <property type="entry name" value="FN3_dom"/>
</dbReference>
<dbReference type="InterPro" id="IPR036116">
    <property type="entry name" value="FN3_sf"/>
</dbReference>
<dbReference type="InterPro" id="IPR013783">
    <property type="entry name" value="Ig-like_fold"/>
</dbReference>
<dbReference type="InterPro" id="IPR048287">
    <property type="entry name" value="TSPN-like_N"/>
</dbReference>
<dbReference type="InterPro" id="IPR002035">
    <property type="entry name" value="VWF_A"/>
</dbReference>
<dbReference type="InterPro" id="IPR036465">
    <property type="entry name" value="vWFA_dom_sf"/>
</dbReference>
<dbReference type="PANTHER" id="PTHR24020">
    <property type="entry name" value="COLLAGEN ALPHA"/>
    <property type="match status" value="1"/>
</dbReference>
<dbReference type="PANTHER" id="PTHR24020:SF15">
    <property type="entry name" value="COLLAGEN ALPHA-1(XIV) CHAIN"/>
    <property type="match status" value="1"/>
</dbReference>
<dbReference type="Pfam" id="PF01391">
    <property type="entry name" value="Collagen"/>
    <property type="match status" value="4"/>
</dbReference>
<dbReference type="Pfam" id="PF00041">
    <property type="entry name" value="fn3"/>
    <property type="match status" value="7"/>
</dbReference>
<dbReference type="Pfam" id="PF00092">
    <property type="entry name" value="VWA"/>
    <property type="match status" value="2"/>
</dbReference>
<dbReference type="PRINTS" id="PR00453">
    <property type="entry name" value="VWFADOMAIN"/>
</dbReference>
<dbReference type="SMART" id="SM00060">
    <property type="entry name" value="FN3"/>
    <property type="match status" value="8"/>
</dbReference>
<dbReference type="SMART" id="SM00210">
    <property type="entry name" value="TSPN"/>
    <property type="match status" value="1"/>
</dbReference>
<dbReference type="SMART" id="SM00327">
    <property type="entry name" value="VWA"/>
    <property type="match status" value="2"/>
</dbReference>
<dbReference type="SUPFAM" id="SSF49899">
    <property type="entry name" value="Concanavalin A-like lectins/glucanases"/>
    <property type="match status" value="1"/>
</dbReference>
<dbReference type="SUPFAM" id="SSF49265">
    <property type="entry name" value="Fibronectin type III"/>
    <property type="match status" value="5"/>
</dbReference>
<dbReference type="SUPFAM" id="SSF53300">
    <property type="entry name" value="vWA-like"/>
    <property type="match status" value="2"/>
</dbReference>
<dbReference type="PROSITE" id="PS50853">
    <property type="entry name" value="FN3"/>
    <property type="match status" value="8"/>
</dbReference>
<dbReference type="PROSITE" id="PS50234">
    <property type="entry name" value="VWFA"/>
    <property type="match status" value="2"/>
</dbReference>
<gene>
    <name evidence="12" type="primary">Col14a1</name>
</gene>
<name>COEA1_MOUSE</name>
<accession>Q80X19</accession>
<accession>Q3UVS2</accession>
<accession>Q8C6X3</accession>
<accession>Q9WV05</accession>
<proteinExistence type="evidence at protein level"/>
<keyword id="KW-0025">Alternative splicing</keyword>
<keyword id="KW-0130">Cell adhesion</keyword>
<keyword id="KW-0176">Collagen</keyword>
<keyword id="KW-1015">Disulfide bond</keyword>
<keyword id="KW-0272">Extracellular matrix</keyword>
<keyword id="KW-0325">Glycoprotein</keyword>
<keyword id="KW-0379">Hydroxylation</keyword>
<keyword id="KW-1185">Reference proteome</keyword>
<keyword id="KW-0677">Repeat</keyword>
<keyword id="KW-0964">Secreted</keyword>
<keyword id="KW-0732">Signal</keyword>
<evidence type="ECO:0000250" key="1"/>
<evidence type="ECO:0000250" key="2">
    <source>
        <dbReference type="UniProtKB" id="P32018"/>
    </source>
</evidence>
<evidence type="ECO:0000255" key="3"/>
<evidence type="ECO:0000255" key="4">
    <source>
        <dbReference type="PROSITE-ProRule" id="PRU00219"/>
    </source>
</evidence>
<evidence type="ECO:0000255" key="5">
    <source>
        <dbReference type="PROSITE-ProRule" id="PRU00316"/>
    </source>
</evidence>
<evidence type="ECO:0000256" key="6">
    <source>
        <dbReference type="SAM" id="MobiDB-lite"/>
    </source>
</evidence>
<evidence type="ECO:0000269" key="7">
    <source>
    </source>
</evidence>
<evidence type="ECO:0000303" key="8">
    <source>
    </source>
</evidence>
<evidence type="ECO:0000305" key="9"/>
<evidence type="ECO:0000312" key="10">
    <source>
        <dbReference type="EMBL" id="AAO64442.1"/>
    </source>
</evidence>
<evidence type="ECO:0000312" key="11">
    <source>
        <dbReference type="EMBL" id="CAB44661.1"/>
    </source>
</evidence>
<evidence type="ECO:0000312" key="12">
    <source>
        <dbReference type="MGI" id="MGI:1341272"/>
    </source>
</evidence>
<organism>
    <name type="scientific">Mus musculus</name>
    <name type="common">Mouse</name>
    <dbReference type="NCBI Taxonomy" id="10090"/>
    <lineage>
        <taxon>Eukaryota</taxon>
        <taxon>Metazoa</taxon>
        <taxon>Chordata</taxon>
        <taxon>Craniata</taxon>
        <taxon>Vertebrata</taxon>
        <taxon>Euteleostomi</taxon>
        <taxon>Mammalia</taxon>
        <taxon>Eutheria</taxon>
        <taxon>Euarchontoglires</taxon>
        <taxon>Glires</taxon>
        <taxon>Rodentia</taxon>
        <taxon>Myomorpha</taxon>
        <taxon>Muroidea</taxon>
        <taxon>Muridae</taxon>
        <taxon>Murinae</taxon>
        <taxon>Mus</taxon>
        <taxon>Mus</taxon>
    </lineage>
</organism>